<name>CYB_RICBR</name>
<gene>
    <name type="primary">petB</name>
    <name type="synonym">cytB</name>
    <name type="ordered locus">RBE_0829</name>
</gene>
<sequence>MSDNITPKTGKTNAIIEWIDYRLPVFSFLKHFSHYQTPKNLSYLWNLGSIAGIALVIQIITGVILAMHYTPHVDHAFDSVEKIMRNVNYGWLLRYTHAVGASMFFAAVYLHIARGLYYGSYKAPRELLWHIGIIIFLTMMATAFMGYVLPWGQMSYWGATVITNLFSAIPLIGKSIVTWLWGGFSVDNPTLNRFFSLHYLLPFIIVALVMLHLVALHQHGSNNPKGIDVKSPKDTIPFHPYYTVKDFVGFGVYFIIFAYFIFYEPNYLGHPDNYIPANPLVTPAHIVPEWYFLPFYAILRAVPSKLGGVLLMFGSIFVLFLLPWLDTSKVRSANYRPIYRIAFWIFMADCLLLGYLGGQPAEEPYITISRFAACYYFFHFLVALPLIGKYEKPLPLPEEL</sequence>
<reference key="1">
    <citation type="journal article" date="2006" name="PLoS Genet.">
        <title>Genome sequence of Rickettsia bellii illuminates the role of amoebae in gene exchanges between intracellular pathogens.</title>
        <authorList>
            <person name="Ogata H."/>
            <person name="La Scola B."/>
            <person name="Audic S."/>
            <person name="Renesto P."/>
            <person name="Blanc G."/>
            <person name="Robert C."/>
            <person name="Fournier P.-E."/>
            <person name="Claverie J.-M."/>
            <person name="Raoult D."/>
        </authorList>
    </citation>
    <scope>NUCLEOTIDE SEQUENCE [LARGE SCALE GENOMIC DNA]</scope>
    <source>
        <strain>RML369-C</strain>
    </source>
</reference>
<organism>
    <name type="scientific">Rickettsia bellii (strain RML369-C)</name>
    <dbReference type="NCBI Taxonomy" id="336407"/>
    <lineage>
        <taxon>Bacteria</taxon>
        <taxon>Pseudomonadati</taxon>
        <taxon>Pseudomonadota</taxon>
        <taxon>Alphaproteobacteria</taxon>
        <taxon>Rickettsiales</taxon>
        <taxon>Rickettsiaceae</taxon>
        <taxon>Rickettsieae</taxon>
        <taxon>Rickettsia</taxon>
        <taxon>belli group</taxon>
    </lineage>
</organism>
<evidence type="ECO:0000250" key="1"/>
<evidence type="ECO:0000255" key="2"/>
<evidence type="ECO:0000255" key="3">
    <source>
        <dbReference type="PROSITE-ProRule" id="PRU00967"/>
    </source>
</evidence>
<evidence type="ECO:0000255" key="4">
    <source>
        <dbReference type="PROSITE-ProRule" id="PRU00968"/>
    </source>
</evidence>
<evidence type="ECO:0000305" key="5"/>
<proteinExistence type="inferred from homology"/>
<comment type="function">
    <text evidence="1">Component of the ubiquinol-cytochrome c reductase complex (complex III or cytochrome b-c1 complex), which is a respiratory chain that generates an electrochemical potential coupled to ATP synthesis.</text>
</comment>
<comment type="cofactor">
    <cofactor evidence="1">
        <name>heme b</name>
        <dbReference type="ChEBI" id="CHEBI:60344"/>
    </cofactor>
    <text evidence="1">Binds 2 heme b groups non-covalently.</text>
</comment>
<comment type="subunit">
    <text evidence="1">The main subunits of complex b-c1 are: cytochrome b, cytochrome c1 and the Rieske protein.</text>
</comment>
<comment type="subcellular location">
    <subcellularLocation>
        <location evidence="5">Cell membrane</location>
        <topology evidence="5">Multi-pass membrane protein</topology>
    </subcellularLocation>
</comment>
<comment type="miscellaneous">
    <text evidence="1">Heme 1 (or BL or b562) is low-potential and absorbs at about 562 nm, and heme 2 (or BH or b566) is high-potential and absorbs at about 566 nm.</text>
</comment>
<comment type="similarity">
    <text evidence="3 4">Belongs to the cytochrome b family.</text>
</comment>
<keyword id="KW-1003">Cell membrane</keyword>
<keyword id="KW-0249">Electron transport</keyword>
<keyword id="KW-0349">Heme</keyword>
<keyword id="KW-0408">Iron</keyword>
<keyword id="KW-0472">Membrane</keyword>
<keyword id="KW-0479">Metal-binding</keyword>
<keyword id="KW-0679">Respiratory chain</keyword>
<keyword id="KW-0812">Transmembrane</keyword>
<keyword id="KW-1133">Transmembrane helix</keyword>
<keyword id="KW-0813">Transport</keyword>
<accession>Q1RIA4</accession>
<protein>
    <recommendedName>
        <fullName>Cytochrome b</fullName>
    </recommendedName>
</protein>
<dbReference type="EMBL" id="CP000087">
    <property type="protein sequence ID" value="ABE04910.1"/>
    <property type="molecule type" value="Genomic_DNA"/>
</dbReference>
<dbReference type="RefSeq" id="WP_011477497.1">
    <property type="nucleotide sequence ID" value="NC_007940.1"/>
</dbReference>
<dbReference type="SMR" id="Q1RIA4"/>
<dbReference type="KEGG" id="rbe:RBE_0829"/>
<dbReference type="eggNOG" id="COG1290">
    <property type="taxonomic scope" value="Bacteria"/>
</dbReference>
<dbReference type="HOGENOM" id="CLU_031114_3_0_5"/>
<dbReference type="OrthoDB" id="9804503at2"/>
<dbReference type="Proteomes" id="UP000001951">
    <property type="component" value="Chromosome"/>
</dbReference>
<dbReference type="GO" id="GO:0005886">
    <property type="term" value="C:plasma membrane"/>
    <property type="evidence" value="ECO:0007669"/>
    <property type="project" value="UniProtKB-SubCell"/>
</dbReference>
<dbReference type="GO" id="GO:0045275">
    <property type="term" value="C:respiratory chain complex III"/>
    <property type="evidence" value="ECO:0007669"/>
    <property type="project" value="InterPro"/>
</dbReference>
<dbReference type="GO" id="GO:0046872">
    <property type="term" value="F:metal ion binding"/>
    <property type="evidence" value="ECO:0007669"/>
    <property type="project" value="UniProtKB-KW"/>
</dbReference>
<dbReference type="GO" id="GO:0008121">
    <property type="term" value="F:ubiquinol-cytochrome-c reductase activity"/>
    <property type="evidence" value="ECO:0007669"/>
    <property type="project" value="InterPro"/>
</dbReference>
<dbReference type="GO" id="GO:0022904">
    <property type="term" value="P:respiratory electron transport chain"/>
    <property type="evidence" value="ECO:0007669"/>
    <property type="project" value="InterPro"/>
</dbReference>
<dbReference type="CDD" id="cd00290">
    <property type="entry name" value="cytochrome_b_C"/>
    <property type="match status" value="1"/>
</dbReference>
<dbReference type="CDD" id="cd00284">
    <property type="entry name" value="Cytochrome_b_N"/>
    <property type="match status" value="1"/>
</dbReference>
<dbReference type="FunFam" id="1.20.810.10:FF:000002">
    <property type="entry name" value="Cytochrome b"/>
    <property type="match status" value="1"/>
</dbReference>
<dbReference type="Gene3D" id="1.20.810.10">
    <property type="entry name" value="Cytochrome Bc1 Complex, Chain C"/>
    <property type="match status" value="1"/>
</dbReference>
<dbReference type="InterPro" id="IPR005798">
    <property type="entry name" value="Cyt_b/b6_C"/>
</dbReference>
<dbReference type="InterPro" id="IPR036150">
    <property type="entry name" value="Cyt_b/b6_C_sf"/>
</dbReference>
<dbReference type="InterPro" id="IPR005797">
    <property type="entry name" value="Cyt_b/b6_N"/>
</dbReference>
<dbReference type="InterPro" id="IPR027387">
    <property type="entry name" value="Cytb/b6-like_sf"/>
</dbReference>
<dbReference type="InterPro" id="IPR030689">
    <property type="entry name" value="Cytochrome_b"/>
</dbReference>
<dbReference type="InterPro" id="IPR048260">
    <property type="entry name" value="Cytochrome_b_C_euk/bac"/>
</dbReference>
<dbReference type="InterPro" id="IPR048259">
    <property type="entry name" value="Cytochrome_b_N_euk/bac"/>
</dbReference>
<dbReference type="InterPro" id="IPR016174">
    <property type="entry name" value="Di-haem_cyt_TM"/>
</dbReference>
<dbReference type="PANTHER" id="PTHR19271">
    <property type="entry name" value="CYTOCHROME B"/>
    <property type="match status" value="1"/>
</dbReference>
<dbReference type="PANTHER" id="PTHR19271:SF16">
    <property type="entry name" value="CYTOCHROME B"/>
    <property type="match status" value="1"/>
</dbReference>
<dbReference type="Pfam" id="PF00032">
    <property type="entry name" value="Cytochrom_B_C"/>
    <property type="match status" value="1"/>
</dbReference>
<dbReference type="Pfam" id="PF00033">
    <property type="entry name" value="Cytochrome_B"/>
    <property type="match status" value="1"/>
</dbReference>
<dbReference type="PIRSF" id="PIRSF038885">
    <property type="entry name" value="COB"/>
    <property type="match status" value="1"/>
</dbReference>
<dbReference type="SUPFAM" id="SSF81648">
    <property type="entry name" value="a domain/subunit of cytochrome bc1 complex (Ubiquinol-cytochrome c reductase)"/>
    <property type="match status" value="1"/>
</dbReference>
<dbReference type="SUPFAM" id="SSF81342">
    <property type="entry name" value="Transmembrane di-heme cytochromes"/>
    <property type="match status" value="1"/>
</dbReference>
<dbReference type="PROSITE" id="PS51003">
    <property type="entry name" value="CYTB_CTER"/>
    <property type="match status" value="1"/>
</dbReference>
<dbReference type="PROSITE" id="PS51002">
    <property type="entry name" value="CYTB_NTER"/>
    <property type="match status" value="1"/>
</dbReference>
<feature type="chain" id="PRO_0000280933" description="Cytochrome b">
    <location>
        <begin position="1"/>
        <end position="400"/>
    </location>
</feature>
<feature type="transmembrane region" description="Helical" evidence="2">
    <location>
        <begin position="47"/>
        <end position="67"/>
    </location>
</feature>
<feature type="transmembrane region" description="Helical" evidence="2">
    <location>
        <begin position="98"/>
        <end position="118"/>
    </location>
</feature>
<feature type="transmembrane region" description="Helical" evidence="2">
    <location>
        <begin position="131"/>
        <end position="151"/>
    </location>
</feature>
<feature type="transmembrane region" description="Helical" evidence="2">
    <location>
        <begin position="166"/>
        <end position="186"/>
    </location>
</feature>
<feature type="transmembrane region" description="Helical" evidence="2">
    <location>
        <begin position="194"/>
        <end position="214"/>
    </location>
</feature>
<feature type="transmembrane region" description="Helical" evidence="2">
    <location>
        <begin position="247"/>
        <end position="267"/>
    </location>
</feature>
<feature type="transmembrane region" description="Helical" evidence="2">
    <location>
        <begin position="306"/>
        <end position="326"/>
    </location>
</feature>
<feature type="transmembrane region" description="Helical" evidence="2">
    <location>
        <begin position="341"/>
        <end position="361"/>
    </location>
</feature>
<feature type="transmembrane region" description="Helical" evidence="2">
    <location>
        <begin position="368"/>
        <end position="388"/>
    </location>
</feature>
<feature type="binding site" description="axial binding residue">
    <location>
        <position position="97"/>
    </location>
    <ligand>
        <name>heme b</name>
        <dbReference type="ChEBI" id="CHEBI:60344"/>
        <label>b562</label>
    </ligand>
    <ligandPart>
        <name>Fe</name>
        <dbReference type="ChEBI" id="CHEBI:18248"/>
    </ligandPart>
</feature>
<feature type="binding site" description="axial binding residue">
    <location>
        <position position="111"/>
    </location>
    <ligand>
        <name>heme b</name>
        <dbReference type="ChEBI" id="CHEBI:60344"/>
        <label>b566</label>
    </ligand>
    <ligandPart>
        <name>Fe</name>
        <dbReference type="ChEBI" id="CHEBI:18248"/>
    </ligandPart>
</feature>
<feature type="binding site" description="axial binding residue">
    <location>
        <position position="198"/>
    </location>
    <ligand>
        <name>heme b</name>
        <dbReference type="ChEBI" id="CHEBI:60344"/>
        <label>b562</label>
    </ligand>
    <ligandPart>
        <name>Fe</name>
        <dbReference type="ChEBI" id="CHEBI:18248"/>
    </ligandPart>
</feature>
<feature type="binding site" description="axial binding residue">
    <location>
        <position position="212"/>
    </location>
    <ligand>
        <name>heme b</name>
        <dbReference type="ChEBI" id="CHEBI:60344"/>
        <label>b566</label>
    </ligand>
    <ligandPart>
        <name>Fe</name>
        <dbReference type="ChEBI" id="CHEBI:18248"/>
    </ligandPart>
</feature>